<evidence type="ECO:0000250" key="1">
    <source>
        <dbReference type="UniProtKB" id="P21217"/>
    </source>
</evidence>
<evidence type="ECO:0000250" key="2">
    <source>
        <dbReference type="UniProtKB" id="Q8HYJ5"/>
    </source>
</evidence>
<evidence type="ECO:0000255" key="3"/>
<evidence type="ECO:0000256" key="4">
    <source>
        <dbReference type="SAM" id="MobiDB-lite"/>
    </source>
</evidence>
<evidence type="ECO:0000269" key="5">
    <source>
    </source>
</evidence>
<evidence type="ECO:0000305" key="6"/>
<feature type="chain" id="PRO_0000221097" description="3-galactosyl-N-acetylglucosaminide 4-alpha-L-fucosyltransferase FUT3">
    <location>
        <begin position="1"/>
        <end position="372"/>
    </location>
</feature>
<feature type="topological domain" description="Cytoplasmic" evidence="3">
    <location>
        <begin position="1"/>
        <end position="15"/>
    </location>
</feature>
<feature type="transmembrane region" description="Helical; Signal-anchor for type II membrane protein" evidence="1 3">
    <location>
        <begin position="16"/>
        <end position="34"/>
    </location>
</feature>
<feature type="topological domain" description="Lumenal" evidence="3">
    <location>
        <begin position="35"/>
        <end position="372"/>
    </location>
</feature>
<feature type="region of interest" description="Disordered" evidence="4">
    <location>
        <begin position="40"/>
        <end position="69"/>
    </location>
</feature>
<feature type="glycosylation site" description="N-linked (GlcNAc...) asparagine" evidence="3">
    <location>
        <position position="165"/>
    </location>
</feature>
<feature type="glycosylation site" description="N-linked (GlcNAc...) asparagine" evidence="3">
    <location>
        <position position="196"/>
    </location>
</feature>
<feature type="sequence variant" id="VAR_018692" description="In allele B." evidence="5">
    <original>R</original>
    <variation>G</variation>
    <location>
        <position position="162"/>
    </location>
</feature>
<feature type="sequence variant" id="VAR_018693" description="In allele B." evidence="5">
    <original>V</original>
    <variation>M</variation>
    <location>
        <position position="304"/>
    </location>
</feature>
<dbReference type="EC" id="2.4.1.65" evidence="1"/>
<dbReference type="EC" id="2.4.1.152" evidence="1"/>
<dbReference type="EC" id="2.4.1.-" evidence="1"/>
<dbReference type="EMBL" id="Y14033">
    <property type="protein sequence ID" value="CAA74360.1"/>
    <property type="molecule type" value="Genomic_DNA"/>
</dbReference>
<dbReference type="RefSeq" id="NP_001009149.1">
    <property type="nucleotide sequence ID" value="NM_001009149.1"/>
</dbReference>
<dbReference type="SMR" id="O19058"/>
<dbReference type="FunCoup" id="O19058">
    <property type="interactions" value="175"/>
</dbReference>
<dbReference type="STRING" id="9598.ENSPTRP00000054902"/>
<dbReference type="CAZy" id="GT10">
    <property type="family name" value="Glycosyltransferase Family 10"/>
</dbReference>
<dbReference type="GlyCosmos" id="O19058">
    <property type="glycosylation" value="2 sites, No reported glycans"/>
</dbReference>
<dbReference type="PaxDb" id="9598-ENSPTRP00000054902"/>
<dbReference type="GeneID" id="493975"/>
<dbReference type="CTD" id="2525"/>
<dbReference type="eggNOG" id="KOG2619">
    <property type="taxonomic scope" value="Eukaryota"/>
</dbReference>
<dbReference type="InParanoid" id="O19058"/>
<dbReference type="BRENDA" id="2.4.1.65">
    <property type="organism ID" value="4497"/>
</dbReference>
<dbReference type="UniPathway" id="UPA00378"/>
<dbReference type="Proteomes" id="UP000002277">
    <property type="component" value="Unplaced"/>
</dbReference>
<dbReference type="GO" id="GO:0032580">
    <property type="term" value="C:Golgi cisterna membrane"/>
    <property type="evidence" value="ECO:0007669"/>
    <property type="project" value="UniProtKB-SubCell"/>
</dbReference>
<dbReference type="GO" id="GO:0017060">
    <property type="term" value="F:3-galactosyl-N-acetylglucosaminide 4-alpha-L-fucosyltransferase activity"/>
    <property type="evidence" value="ECO:0000250"/>
    <property type="project" value="UniProtKB"/>
</dbReference>
<dbReference type="GO" id="GO:0017083">
    <property type="term" value="F:4-galactosyl-N-acetylglucosaminide 3-alpha-L-fucosyltransferase activity"/>
    <property type="evidence" value="ECO:0000250"/>
    <property type="project" value="UniProtKB"/>
</dbReference>
<dbReference type="GO" id="GO:0046920">
    <property type="term" value="F:alpha-(1-&gt;3)-fucosyltransferase activity"/>
    <property type="evidence" value="ECO:0000318"/>
    <property type="project" value="GO_Central"/>
</dbReference>
<dbReference type="GO" id="GO:0036065">
    <property type="term" value="P:fucosylation"/>
    <property type="evidence" value="ECO:0000250"/>
    <property type="project" value="UniProtKB"/>
</dbReference>
<dbReference type="GO" id="GO:0006629">
    <property type="term" value="P:lipid metabolic process"/>
    <property type="evidence" value="ECO:0007669"/>
    <property type="project" value="UniProtKB-KW"/>
</dbReference>
<dbReference type="GO" id="GO:0009311">
    <property type="term" value="P:oligosaccharide metabolic process"/>
    <property type="evidence" value="ECO:0000250"/>
    <property type="project" value="UniProtKB"/>
</dbReference>
<dbReference type="GO" id="GO:0022409">
    <property type="term" value="P:positive regulation of cell-cell adhesion"/>
    <property type="evidence" value="ECO:0000250"/>
    <property type="project" value="UniProtKB"/>
</dbReference>
<dbReference type="GO" id="GO:0006487">
    <property type="term" value="P:protein N-linked glycosylation"/>
    <property type="evidence" value="ECO:0000250"/>
    <property type="project" value="UniProtKB"/>
</dbReference>
<dbReference type="GO" id="GO:0006493">
    <property type="term" value="P:protein O-linked glycosylation"/>
    <property type="evidence" value="ECO:0000250"/>
    <property type="project" value="UniProtKB"/>
</dbReference>
<dbReference type="GO" id="GO:0030334">
    <property type="term" value="P:regulation of cell migration"/>
    <property type="evidence" value="ECO:0000250"/>
    <property type="project" value="UniProtKB"/>
</dbReference>
<dbReference type="GO" id="GO:0042127">
    <property type="term" value="P:regulation of cell population proliferation"/>
    <property type="evidence" value="ECO:0000250"/>
    <property type="project" value="UniProtKB"/>
</dbReference>
<dbReference type="FunFam" id="3.40.50.11660:FF:000001">
    <property type="entry name" value="alpha-(1,3)-fucosyltransferase 9"/>
    <property type="match status" value="1"/>
</dbReference>
<dbReference type="Gene3D" id="3.40.50.11660">
    <property type="entry name" value="Glycosyl transferase family 10, C-terminal domain"/>
    <property type="match status" value="1"/>
</dbReference>
<dbReference type="InterPro" id="IPR055270">
    <property type="entry name" value="Glyco_tran_10_C"/>
</dbReference>
<dbReference type="InterPro" id="IPR031481">
    <property type="entry name" value="Glyco_tran_10_N"/>
</dbReference>
<dbReference type="InterPro" id="IPR001503">
    <property type="entry name" value="Glyco_trans_10"/>
</dbReference>
<dbReference type="InterPro" id="IPR038577">
    <property type="entry name" value="GT10-like_C_sf"/>
</dbReference>
<dbReference type="PANTHER" id="PTHR11929:SF165">
    <property type="entry name" value="3-GALACTOSYL-N-ACETYLGLUCOSAMINIDE 4-ALPHA-L-FUCOSYLTRANSFERASE FUT3"/>
    <property type="match status" value="1"/>
</dbReference>
<dbReference type="PANTHER" id="PTHR11929">
    <property type="entry name" value="ALPHA- 1,3 -FUCOSYLTRANSFERASE"/>
    <property type="match status" value="1"/>
</dbReference>
<dbReference type="Pfam" id="PF17039">
    <property type="entry name" value="Glyco_tran_10_N"/>
    <property type="match status" value="1"/>
</dbReference>
<dbReference type="Pfam" id="PF00852">
    <property type="entry name" value="Glyco_transf_10"/>
    <property type="match status" value="1"/>
</dbReference>
<dbReference type="SUPFAM" id="SSF53756">
    <property type="entry name" value="UDP-Glycosyltransferase/glycogen phosphorylase"/>
    <property type="match status" value="1"/>
</dbReference>
<protein>
    <recommendedName>
        <fullName evidence="1">3-galactosyl-N-acetylglucosaminide 4-alpha-L-fucosyltransferase FUT3</fullName>
        <ecNumber evidence="1">2.4.1.65</ecNumber>
    </recommendedName>
    <alternativeName>
        <fullName>4-galactosyl-N-acetylglucosaminide 3-alpha-L-fucosyltransferase</fullName>
        <ecNumber evidence="1">2.4.1.152</ecNumber>
    </alternativeName>
    <alternativeName>
        <fullName evidence="1">Alpha-3-fucosyltransferase FUT3</fullName>
        <ecNumber evidence="1">2.4.1.-</ecNumber>
    </alternativeName>
    <alternativeName>
        <fullName evidence="2">Alpha-3/4-fucosyltransferase</fullName>
    </alternativeName>
    <alternativeName>
        <fullName>Blood group Lewis alpha-4-fucosyltransferase</fullName>
        <shortName>Lewis FT</shortName>
    </alternativeName>
    <alternativeName>
        <fullName>Fucosyltransferase 3</fullName>
    </alternativeName>
    <alternativeName>
        <fullName>Fucosyltransferase III</fullName>
        <shortName>FucT-III</shortName>
    </alternativeName>
</protein>
<keyword id="KW-0325">Glycoprotein</keyword>
<keyword id="KW-0328">Glycosyltransferase</keyword>
<keyword id="KW-0333">Golgi apparatus</keyword>
<keyword id="KW-0443">Lipid metabolism</keyword>
<keyword id="KW-0472">Membrane</keyword>
<keyword id="KW-1185">Reference proteome</keyword>
<keyword id="KW-0735">Signal-anchor</keyword>
<keyword id="KW-0808">Transferase</keyword>
<keyword id="KW-0812">Transmembrane</keyword>
<keyword id="KW-1133">Transmembrane helix</keyword>
<accession>O19058</accession>
<proteinExistence type="inferred from homology"/>
<sequence length="372" mass="43234">MDPLGAAKPQWPWRRCLAALLFQLLVAVCFFSYLRVSRDDATGSPRPGLMAVEPVTGAPSGSSRQDTTPTRPTLLILLWTWPFHIPVALSRCSEMVPGAADCHITADRKVYPQADAVIVHHWDIMYNPKSRLPPSPRPQGQRWIWFNLEPPPNCQHLEALDRYFNLTMSYRSDSDIFTPYGWLEPWSGQPAHPPLNLSAKTELVAWAVSNWKLDSARVRYYQSLQAHLKVDVYGRSHKPLPKGTMMETLSRYKFYLAFENSLHPDYITEKLWRNALEAWAVPVVLGPSRSNYERFLPPDAFIHVDDFQSPKDLARYLQELDKDHARYLSYFRWRETLRPRSFSWALDFCKACWKLQQESRYQTMRSIAAWFT</sequence>
<comment type="function">
    <text evidence="1">Catalyzes the transfer of L-fucose, from a guanosine diphosphate-beta-L-fucose, to both the subterminal N-acetyl glucosamine (GlcNAc) of type 1 chain (beta-D-Gal-(1-&gt;3)-beta-D-GlcNAc) glycolipids and oligosaccharides via an alpha(1,4) linkage, and the subterminal glucose (Glc) or GlcNAc of type 2 chain (beta-D-Gal-(1-&gt;4)-beta-D-GlcNAc) oligosaccharides via an alpha(1,3) linkage, independently of the presence of terminal alpha-L-fucosyl-(1,2) moieties on the terminal galactose of these acceptors and participates in the blood groups Lewis determination and expression of Lewis a (Le(a)), lewis b (Le(b)), Lewis x/SSEA-1 (Le(x)) and lewis y (Le(y)) antigens. Also catalyzes the transfer of L-fucose to subterminal GlcNAc of sialyl- and disialyl-lactotetraosylceramide to produce sialyl Lewis a (sLe(a)) and disialyl Lewis a via an alpha(1,4) linkage and therefore may regulate cell surface sialyl Lewis a expression and consequently regulates adhesive properties to E-selectin, cell proliferation and migration. Catalyzes the transfer of an L-fucose to 3'-sialyl-N-acetyllactosamine by an alpha(1,3) linkage, which allows the formation of sialyl-Lewis x structure and therefore may regulate the sialyl-Lewis x surface antigen expression and consequently adhesive properties to E-selectin. Prefers type 1 chain over type 2 acceptors. Type 1 tetrasaccharide is a better acceptor than type 1 disaccharide suggesting that a beta anomeric configuration of GlcNAc in the substrate is preferred. Lewis-positive (Le(+)) individuals have an active enzyme while Lewis-negative (Le(-)) individuals have an inactive enzyme.</text>
</comment>
<comment type="catalytic activity">
    <reaction evidence="1">
        <text>a beta-D-galactosyl-(1-&gt;3)-N-acetyl-beta-D-glucosaminyl derivative + GDP-beta-L-fucose = a beta-D-galactosyl-(1-&gt;3)-[alpha-L-fucosyl-(1-&gt;4)]-N-acetyl-beta-D-glucosaminyl derivative + GDP + H(+)</text>
        <dbReference type="Rhea" id="RHEA:23628"/>
        <dbReference type="ChEBI" id="CHEBI:15378"/>
        <dbReference type="ChEBI" id="CHEBI:57273"/>
        <dbReference type="ChEBI" id="CHEBI:58189"/>
        <dbReference type="ChEBI" id="CHEBI:133506"/>
        <dbReference type="ChEBI" id="CHEBI:140304"/>
        <dbReference type="EC" id="2.4.1.65"/>
    </reaction>
    <physiologicalReaction direction="left-to-right" evidence="1">
        <dbReference type="Rhea" id="RHEA:23629"/>
    </physiologicalReaction>
</comment>
<comment type="catalytic activity">
    <reaction evidence="1">
        <text>an N-acetyl-alpha-neuraminyl-(2-&gt;3)-beta-D-galactosyl-(1-&gt;4)-N-acetyl-beta-D-glucosaminyl derivative + GDP-beta-L-fucose = an alpha-Neu5Ac-(2-&gt;3)-beta-D-Gal-(1-&gt;4)-[alpha-L-Fuc-(1-&gt;3)]-beta-D-GlcNAc derivative + GDP + H(+)</text>
        <dbReference type="Rhea" id="RHEA:56076"/>
        <dbReference type="ChEBI" id="CHEBI:15378"/>
        <dbReference type="ChEBI" id="CHEBI:57273"/>
        <dbReference type="ChEBI" id="CHEBI:58189"/>
        <dbReference type="ChEBI" id="CHEBI:136545"/>
        <dbReference type="ChEBI" id="CHEBI:139509"/>
    </reaction>
    <physiologicalReaction direction="left-to-right" evidence="1">
        <dbReference type="Rhea" id="RHEA:56077"/>
    </physiologicalReaction>
</comment>
<comment type="catalytic activity">
    <reaction evidence="1">
        <text>a beta-D-galactosyl-(1-&gt;4)-N-acetyl-beta-D-glucosaminyl derivative + GDP-beta-L-fucose = a beta-D-galactosyl-(1-&gt;4)-[alpha-L-fucosyl-(1-&gt;3)]-N-acetyl-beta-D-glucosaminyl derivative + GDP + H(+)</text>
        <dbReference type="Rhea" id="RHEA:14257"/>
        <dbReference type="ChEBI" id="CHEBI:15378"/>
        <dbReference type="ChEBI" id="CHEBI:57273"/>
        <dbReference type="ChEBI" id="CHEBI:58189"/>
        <dbReference type="ChEBI" id="CHEBI:133507"/>
        <dbReference type="ChEBI" id="CHEBI:137941"/>
        <dbReference type="EC" id="2.4.1.152"/>
    </reaction>
    <physiologicalReaction direction="left-to-right" evidence="1">
        <dbReference type="Rhea" id="RHEA:14258"/>
    </physiologicalReaction>
</comment>
<comment type="catalytic activity">
    <reaction evidence="1">
        <text>an alpha-Neu5Ac-(2-&gt;3)-beta-D-Gal-(1-&gt;4)-beta-D-GlcNAc-(1-&gt;3)-beta-D-Gal-(1-&gt;4)-[alpha-L-Fuc-(1-&gt;3)]-beta-D-GlcNAc derivative + GDP-beta-L-fucose = an alpha-Neu5Ac-(2-&gt;3)-beta-D-Gal-(1-&gt;4)-[alpha-L-Fuc-(1-&gt;3)]-beta-D-GlcNAc-(1-&gt;3)-beta-D-Gal-(1-&gt;4)-[alpha-L-Fuc-(1-&gt;3)]-beta-D-GlcNAc derivative + GDP + H(+)</text>
        <dbReference type="Rhea" id="RHEA:52864"/>
        <dbReference type="ChEBI" id="CHEBI:15378"/>
        <dbReference type="ChEBI" id="CHEBI:57273"/>
        <dbReference type="ChEBI" id="CHEBI:58189"/>
        <dbReference type="ChEBI" id="CHEBI:145342"/>
        <dbReference type="ChEBI" id="CHEBI:145343"/>
    </reaction>
    <physiologicalReaction direction="left-to-right" evidence="1">
        <dbReference type="Rhea" id="RHEA:52865"/>
    </physiologicalReaction>
</comment>
<comment type="catalytic activity">
    <reaction evidence="1">
        <text>Lc4Cer + GDP-beta-L-fucose = a lactoside III(4)-a-Fuc-Lc4Cer + GDP + H(+)</text>
        <dbReference type="Rhea" id="RHEA:48824"/>
        <dbReference type="ChEBI" id="CHEBI:15378"/>
        <dbReference type="ChEBI" id="CHEBI:57273"/>
        <dbReference type="ChEBI" id="CHEBI:58189"/>
        <dbReference type="ChEBI" id="CHEBI:90800"/>
        <dbReference type="ChEBI" id="CHEBI:90811"/>
    </reaction>
    <physiologicalReaction direction="left-to-right" evidence="1">
        <dbReference type="Rhea" id="RHEA:48825"/>
    </physiologicalReaction>
</comment>
<comment type="catalytic activity">
    <reaction evidence="1">
        <text>a beta-D-Gal-(1-&gt;3)-beta-D-GlcNAc-(1-&gt;3)-beta-D-Gal-(1-&gt;4)-beta-D-Glc-(1&lt;-&gt;1')-Cer(d18:1(4E)) + GDP-beta-L-fucose = a III(4)-a-Fuc-Lc4Cer(d18:1(4E)) + GDP + H(+)</text>
        <dbReference type="Rhea" id="RHEA:48328"/>
        <dbReference type="ChEBI" id="CHEBI:15378"/>
        <dbReference type="ChEBI" id="CHEBI:17292"/>
        <dbReference type="ChEBI" id="CHEBI:57273"/>
        <dbReference type="ChEBI" id="CHEBI:58189"/>
        <dbReference type="ChEBI" id="CHEBI:90292"/>
    </reaction>
    <physiologicalReaction direction="left-to-right" evidence="1">
        <dbReference type="Rhea" id="RHEA:48329"/>
    </physiologicalReaction>
</comment>
<comment type="catalytic activity">
    <reaction evidence="1">
        <text>N-acetyl-alpha-neuraminosyl-(2-&gt;3)-beta-D-galactosyl-(1-&gt;3)-[N-acetyl-alpha-neuraminosyl-(2-&gt;6)]-N-acetyl-beta-D-glucosaminyl-(1-&gt;3)-beta-D-galactosyl-(1-&gt;4)-beta-D-glucosyl-(1&lt;-&gt;1')-N-acyl-sphing-4-enine + GDP-beta-L-fucose = N-acetyl-alpha-neuraminosyl-(2-&gt;3)-beta-D-galactosyl-(1-&gt;3)-alpha-L-fucosyl-(1-&gt;4)-[N-acetyl-alpha-neuraminosyl-(2-&gt;6)-N-acetyl-beta-D-glucosaminyl-(1-&gt;3)]-beta-D-galactosyl-(1-&gt;4)-beta-D-glucosyl-(1&lt;-&gt;1')-N-acyl-sphing-4-enine + GDP + H(+)</text>
        <dbReference type="Rhea" id="RHEA:47892"/>
        <dbReference type="ChEBI" id="CHEBI:15378"/>
        <dbReference type="ChEBI" id="CHEBI:57273"/>
        <dbReference type="ChEBI" id="CHEBI:58189"/>
        <dbReference type="ChEBI" id="CHEBI:88079"/>
        <dbReference type="ChEBI" id="CHEBI:88089"/>
    </reaction>
    <physiologicalReaction direction="left-to-right" evidence="1">
        <dbReference type="Rhea" id="RHEA:47893"/>
    </physiologicalReaction>
</comment>
<comment type="catalytic activity">
    <reaction evidence="1">
        <text>N-acetyl-alpha-neuraminosyl-(2-&gt;3)-beta-D-galactosyl-(1-&gt;3)-N-acetyl-beta-D-glucosaminyl-(1-&gt;3)-beta-D-galactosyl-(1-&gt;4)-beta-D-glucosyl-(1&lt;-&gt;1')-N-acyl-sphing-4-enine + GDP-beta-L-fucose = N-acetyl-alpha-neuraminosyl-(2-&gt;3)-beta-D-galactosyl-(1-&gt;3)-alpha-L-fucosyl-(1-&gt;4)-[N-acetyl-beta-D-glucosaminyl-(1-&gt;3)]-beta-D-galactosyl-(1-&gt;4)-beta-D-glucosyl-(1&lt;-&gt;1')-N-acyl-sphing-4-enine + GDP + H(+)</text>
        <dbReference type="Rhea" id="RHEA:47888"/>
        <dbReference type="ChEBI" id="CHEBI:15378"/>
        <dbReference type="ChEBI" id="CHEBI:57273"/>
        <dbReference type="ChEBI" id="CHEBI:58189"/>
        <dbReference type="ChEBI" id="CHEBI:88073"/>
        <dbReference type="ChEBI" id="CHEBI:88088"/>
    </reaction>
    <physiologicalReaction direction="left-to-right" evidence="1">
        <dbReference type="Rhea" id="RHEA:47889"/>
    </physiologicalReaction>
</comment>
<comment type="catalytic activity">
    <reaction evidence="1">
        <text>beta-D-galactosyl-(1-&gt;3)-N-acetyl-D-glucosamine + GDP-beta-L-fucose = beta-D-galactosyl-(1-&gt;3)-[alpha-L-fucosyl-(1-&gt;4)]-N-acetyl-D-glucosamine + GDP + H(+)</text>
        <dbReference type="Rhea" id="RHEA:62844"/>
        <dbReference type="ChEBI" id="CHEBI:15378"/>
        <dbReference type="ChEBI" id="CHEBI:27707"/>
        <dbReference type="ChEBI" id="CHEBI:57273"/>
        <dbReference type="ChEBI" id="CHEBI:58189"/>
        <dbReference type="ChEBI" id="CHEBI:62265"/>
    </reaction>
    <physiologicalReaction direction="left-to-right" evidence="1">
        <dbReference type="Rhea" id="RHEA:62845"/>
    </physiologicalReaction>
</comment>
<comment type="catalytic activity">
    <reaction evidence="1">
        <text>alpha-L-Fuc-(1-&gt;2)-beta-D-Gal-(1-&gt;3)-D-GlcNAc + GDP-beta-L-fucose = alpha-L-Fuc-(1-&gt;2)-beta-D-Gal-(1-&gt;3)-[alpha-L-Fuc-(1-&gt;4)]-D-GlcNAc + GDP + H(+)</text>
        <dbReference type="Rhea" id="RHEA:62896"/>
        <dbReference type="ChEBI" id="CHEBI:15378"/>
        <dbReference type="ChEBI" id="CHEBI:57273"/>
        <dbReference type="ChEBI" id="CHEBI:58189"/>
        <dbReference type="ChEBI" id="CHEBI:59440"/>
        <dbReference type="ChEBI" id="CHEBI:62259"/>
    </reaction>
    <physiologicalReaction direction="left-to-right" evidence="1">
        <dbReference type="Rhea" id="RHEA:62897"/>
    </physiologicalReaction>
</comment>
<comment type="catalytic activity">
    <reaction evidence="1">
        <text>alpha-L-Fuc-(1-&gt;2)-beta-D-Gal-(1-&gt;4)-D-GlcNAc + GDP-beta-L-fucose = alpha-L-Fuc-(1-&gt;2)-beta-D-Gal-(1-&gt;4)-[alpha-L-Fuc-(1-&gt;3)]-D-GlcNAc + GDP + H(+)</text>
        <dbReference type="Rhea" id="RHEA:62900"/>
        <dbReference type="ChEBI" id="CHEBI:15378"/>
        <dbReference type="ChEBI" id="CHEBI:57273"/>
        <dbReference type="ChEBI" id="CHEBI:58189"/>
        <dbReference type="ChEBI" id="CHEBI:62263"/>
        <dbReference type="ChEBI" id="CHEBI:62507"/>
    </reaction>
    <physiologicalReaction direction="left-to-right" evidence="1">
        <dbReference type="Rhea" id="RHEA:62901"/>
    </physiologicalReaction>
</comment>
<comment type="catalytic activity">
    <reaction evidence="1">
        <text>beta-D-galactosyl-(1-&gt;4)-N-acetyl-D-glucosamine + GDP-beta-L-fucose = beta-D-galactosyl-(1-&gt;4)-[alpha-L-fucosyl-(1-&gt;3)]-N-acetyl-D-glucosamine + GDP + H(+)</text>
        <dbReference type="Rhea" id="RHEA:62824"/>
        <dbReference type="ChEBI" id="CHEBI:15378"/>
        <dbReference type="ChEBI" id="CHEBI:57273"/>
        <dbReference type="ChEBI" id="CHEBI:58189"/>
        <dbReference type="ChEBI" id="CHEBI:60152"/>
        <dbReference type="ChEBI" id="CHEBI:62287"/>
    </reaction>
    <physiologicalReaction direction="left-to-right" evidence="1">
        <dbReference type="Rhea" id="RHEA:62825"/>
    </physiologicalReaction>
</comment>
<comment type="catalytic activity">
    <reaction evidence="1">
        <text>lactose + GDP-beta-L-fucose = beta-D-galactosyl-(1-&gt;4)-[alpha-L-fucosyl-(1-&gt;3)]-D-glucose + GDP + H(+)</text>
        <dbReference type="Rhea" id="RHEA:62888"/>
        <dbReference type="ChEBI" id="CHEBI:15378"/>
        <dbReference type="ChEBI" id="CHEBI:17716"/>
        <dbReference type="ChEBI" id="CHEBI:57273"/>
        <dbReference type="ChEBI" id="CHEBI:58189"/>
        <dbReference type="ChEBI" id="CHEBI:90065"/>
    </reaction>
    <physiologicalReaction direction="left-to-right" evidence="1">
        <dbReference type="Rhea" id="RHEA:62889"/>
    </physiologicalReaction>
</comment>
<comment type="catalytic activity">
    <reaction evidence="1">
        <text>an alpha-Neu5Ac-(2-&gt;3)-beta-D-Gal-(1-&gt;3)-D-GlcNAc derivative + GDP-beta-L-fucose = an alpha-Neu5Ac-(2-&gt;3)-beta-D-Gal-(1-&gt;3)-[alpha-L-Fuc-(1-&gt;4)]-beta-D-GlcNAc derivative + GDP + H(+)</text>
        <dbReference type="Rhea" id="RHEA:62904"/>
        <dbReference type="ChEBI" id="CHEBI:15378"/>
        <dbReference type="ChEBI" id="CHEBI:57273"/>
        <dbReference type="ChEBI" id="CHEBI:58189"/>
        <dbReference type="ChEBI" id="CHEBI:146021"/>
        <dbReference type="ChEBI" id="CHEBI:146022"/>
    </reaction>
    <physiologicalReaction direction="left-to-right" evidence="1">
        <dbReference type="Rhea" id="RHEA:62905"/>
    </physiologicalReaction>
</comment>
<comment type="pathway">
    <text evidence="1">Protein modification; protein glycosylation.</text>
</comment>
<comment type="subcellular location">
    <subcellularLocation>
        <location evidence="1">Golgi apparatus</location>
        <location evidence="1">Golgi stack membrane</location>
        <topology evidence="1">Single-pass type II membrane protein</topology>
    </subcellularLocation>
    <text evidence="1">Membrane-bound form in trans cisternae of Golgi.</text>
</comment>
<comment type="PTM">
    <text evidence="1">Glycosylated.</text>
</comment>
<comment type="polymorphism">
    <text>There are two alleles, A and B. Allele A has Arg-162 and Val-304. Allele B has Gly-162 and Met-304.</text>
</comment>
<comment type="similarity">
    <text evidence="6">Belongs to the glycosyltransferase 10 family.</text>
</comment>
<gene>
    <name evidence="1" type="primary">FUT3</name>
</gene>
<reference key="1">
    <citation type="journal article" date="1997" name="J. Biol. Chem.">
        <title>Evolution of fucosyltransferase genes in vertebrates.</title>
        <authorList>
            <person name="Costache M."/>
            <person name="Apoil P.-A."/>
            <person name="Cailleau A."/>
            <person name="Elmgren A."/>
            <person name="Larson G."/>
            <person name="Henry S."/>
            <person name="Blancher A."/>
            <person name="Iordachescu D."/>
            <person name="Oriol R."/>
            <person name="Mollicone R."/>
        </authorList>
    </citation>
    <scope>NUCLEOTIDE SEQUENCE [GENOMIC DNA]</scope>
    <scope>VARIANTS GLY-162 AND MET-304</scope>
</reference>
<name>FUT3_PANTR</name>
<organism>
    <name type="scientific">Pan troglodytes</name>
    <name type="common">Chimpanzee</name>
    <dbReference type="NCBI Taxonomy" id="9598"/>
    <lineage>
        <taxon>Eukaryota</taxon>
        <taxon>Metazoa</taxon>
        <taxon>Chordata</taxon>
        <taxon>Craniata</taxon>
        <taxon>Vertebrata</taxon>
        <taxon>Euteleostomi</taxon>
        <taxon>Mammalia</taxon>
        <taxon>Eutheria</taxon>
        <taxon>Euarchontoglires</taxon>
        <taxon>Primates</taxon>
        <taxon>Haplorrhini</taxon>
        <taxon>Catarrhini</taxon>
        <taxon>Hominidae</taxon>
        <taxon>Pan</taxon>
    </lineage>
</organism>